<evidence type="ECO:0000255" key="1">
    <source>
        <dbReference type="PROSITE-ProRule" id="PRU00238"/>
    </source>
</evidence>
<protein>
    <recommendedName>
        <fullName>Hemoglobin subunit omega</fullName>
    </recommendedName>
    <alternativeName>
        <fullName>Hemoglobin omega chain</fullName>
    </alternativeName>
    <alternativeName>
        <fullName>Omega-globin</fullName>
    </alternativeName>
</protein>
<name>HBO_NOTEU</name>
<proteinExistence type="evidence at protein level"/>
<organism>
    <name type="scientific">Notamacropus eugenii</name>
    <name type="common">Tammar wallaby</name>
    <name type="synonym">Macropus eugenii</name>
    <dbReference type="NCBI Taxonomy" id="9315"/>
    <lineage>
        <taxon>Eukaryota</taxon>
        <taxon>Metazoa</taxon>
        <taxon>Chordata</taxon>
        <taxon>Craniata</taxon>
        <taxon>Vertebrata</taxon>
        <taxon>Euteleostomi</taxon>
        <taxon>Mammalia</taxon>
        <taxon>Metatheria</taxon>
        <taxon>Diprotodontia</taxon>
        <taxon>Macropodidae</taxon>
        <taxon>Notamacropus</taxon>
    </lineage>
</organism>
<sequence length="54" mass="6131">VHWTAEEKQIILAIWAKIDIEEAGAAALSRLLVVYPWTQRYFKNFGNLSSPTAI</sequence>
<keyword id="KW-0903">Direct protein sequencing</keyword>
<keyword id="KW-0349">Heme</keyword>
<keyword id="KW-0408">Iron</keyword>
<keyword id="KW-0479">Metal-binding</keyword>
<keyword id="KW-0561">Oxygen transport</keyword>
<keyword id="KW-0813">Transport</keyword>
<dbReference type="SMR" id="P81041"/>
<dbReference type="HOGENOM" id="CLU_003827_10_0_1"/>
<dbReference type="GO" id="GO:0072562">
    <property type="term" value="C:blood microparticle"/>
    <property type="evidence" value="ECO:0007669"/>
    <property type="project" value="TreeGrafter"/>
</dbReference>
<dbReference type="GO" id="GO:0031838">
    <property type="term" value="C:haptoglobin-hemoglobin complex"/>
    <property type="evidence" value="ECO:0007669"/>
    <property type="project" value="TreeGrafter"/>
</dbReference>
<dbReference type="GO" id="GO:0005833">
    <property type="term" value="C:hemoglobin complex"/>
    <property type="evidence" value="ECO:0007669"/>
    <property type="project" value="InterPro"/>
</dbReference>
<dbReference type="GO" id="GO:0031720">
    <property type="term" value="F:haptoglobin binding"/>
    <property type="evidence" value="ECO:0007669"/>
    <property type="project" value="TreeGrafter"/>
</dbReference>
<dbReference type="GO" id="GO:0020037">
    <property type="term" value="F:heme binding"/>
    <property type="evidence" value="ECO:0007669"/>
    <property type="project" value="InterPro"/>
</dbReference>
<dbReference type="GO" id="GO:0046872">
    <property type="term" value="F:metal ion binding"/>
    <property type="evidence" value="ECO:0007669"/>
    <property type="project" value="UniProtKB-KW"/>
</dbReference>
<dbReference type="GO" id="GO:0043177">
    <property type="term" value="F:organic acid binding"/>
    <property type="evidence" value="ECO:0007669"/>
    <property type="project" value="TreeGrafter"/>
</dbReference>
<dbReference type="GO" id="GO:0019825">
    <property type="term" value="F:oxygen binding"/>
    <property type="evidence" value="ECO:0007669"/>
    <property type="project" value="InterPro"/>
</dbReference>
<dbReference type="GO" id="GO:0005344">
    <property type="term" value="F:oxygen carrier activity"/>
    <property type="evidence" value="ECO:0007669"/>
    <property type="project" value="UniProtKB-KW"/>
</dbReference>
<dbReference type="GO" id="GO:0004601">
    <property type="term" value="F:peroxidase activity"/>
    <property type="evidence" value="ECO:0007669"/>
    <property type="project" value="TreeGrafter"/>
</dbReference>
<dbReference type="GO" id="GO:0042744">
    <property type="term" value="P:hydrogen peroxide catabolic process"/>
    <property type="evidence" value="ECO:0007669"/>
    <property type="project" value="TreeGrafter"/>
</dbReference>
<dbReference type="Gene3D" id="1.10.490.10">
    <property type="entry name" value="Globins"/>
    <property type="match status" value="1"/>
</dbReference>
<dbReference type="InterPro" id="IPR000971">
    <property type="entry name" value="Globin"/>
</dbReference>
<dbReference type="InterPro" id="IPR009050">
    <property type="entry name" value="Globin-like_sf"/>
</dbReference>
<dbReference type="InterPro" id="IPR012292">
    <property type="entry name" value="Globin/Proto"/>
</dbReference>
<dbReference type="InterPro" id="IPR002337">
    <property type="entry name" value="Hemoglobin_b"/>
</dbReference>
<dbReference type="InterPro" id="IPR050056">
    <property type="entry name" value="Hemoglobin_oxygen_transport"/>
</dbReference>
<dbReference type="PANTHER" id="PTHR11442:SF95">
    <property type="entry name" value="GLOBIN FAMILY PROFILE DOMAIN-CONTAINING PROTEIN"/>
    <property type="match status" value="1"/>
</dbReference>
<dbReference type="PANTHER" id="PTHR11442">
    <property type="entry name" value="HEMOGLOBIN FAMILY MEMBER"/>
    <property type="match status" value="1"/>
</dbReference>
<dbReference type="PRINTS" id="PR00814">
    <property type="entry name" value="BETAHAEM"/>
</dbReference>
<dbReference type="SUPFAM" id="SSF46458">
    <property type="entry name" value="Globin-like"/>
    <property type="match status" value="1"/>
</dbReference>
<dbReference type="PROSITE" id="PS01033">
    <property type="entry name" value="GLOBIN"/>
    <property type="match status" value="1"/>
</dbReference>
<reference key="1">
    <citation type="journal article" date="1997" name="Eur. J. Biochem.">
        <title>Characterization of the embryonic globin chains of the marsupial Tammar wallaby, Macropus eugenii.</title>
        <authorList>
            <person name="Holland R.A.B."/>
            <person name="Gooley A.A."/>
        </authorList>
    </citation>
    <scope>PROTEIN SEQUENCE</scope>
    <source>
        <tissue>Blood</tissue>
    </source>
</reference>
<feature type="chain" id="PRO_0000053273" description="Hemoglobin subunit omega">
    <location>
        <begin position="1"/>
        <end position="54" status="greater than"/>
    </location>
</feature>
<feature type="domain" description="Globin" evidence="1">
    <location>
        <begin position="2"/>
        <end position="54"/>
    </location>
</feature>
<feature type="non-terminal residue">
    <location>
        <position position="54"/>
    </location>
</feature>
<comment type="function">
    <text>Hemoglobin omega chain is an embryonic-type beta-type chain found in prenatal and neonatal marsupials.</text>
</comment>
<comment type="similarity">
    <text evidence="1">Belongs to the globin family.</text>
</comment>
<accession>P81041</accession>